<accession>B7HFA9</accession>
<feature type="chain" id="PRO_0000388826" description="UPF0756 membrane protein BCB4264_A4705">
    <location>
        <begin position="1"/>
        <end position="153"/>
    </location>
</feature>
<feature type="transmembrane region" description="Helical" evidence="1">
    <location>
        <begin position="8"/>
        <end position="28"/>
    </location>
</feature>
<feature type="transmembrane region" description="Helical" evidence="1">
    <location>
        <begin position="54"/>
        <end position="74"/>
    </location>
</feature>
<feature type="transmembrane region" description="Helical" evidence="1">
    <location>
        <begin position="87"/>
        <end position="107"/>
    </location>
</feature>
<feature type="transmembrane region" description="Helical" evidence="1">
    <location>
        <begin position="117"/>
        <end position="137"/>
    </location>
</feature>
<protein>
    <recommendedName>
        <fullName evidence="1">UPF0756 membrane protein BCB4264_A4705</fullName>
    </recommendedName>
</protein>
<organism>
    <name type="scientific">Bacillus cereus (strain B4264)</name>
    <dbReference type="NCBI Taxonomy" id="405532"/>
    <lineage>
        <taxon>Bacteria</taxon>
        <taxon>Bacillati</taxon>
        <taxon>Bacillota</taxon>
        <taxon>Bacilli</taxon>
        <taxon>Bacillales</taxon>
        <taxon>Bacillaceae</taxon>
        <taxon>Bacillus</taxon>
        <taxon>Bacillus cereus group</taxon>
    </lineage>
</organism>
<dbReference type="EMBL" id="CP001176">
    <property type="protein sequence ID" value="ACK62134.1"/>
    <property type="molecule type" value="Genomic_DNA"/>
</dbReference>
<dbReference type="RefSeq" id="WP_000625509.1">
    <property type="nucleotide sequence ID" value="NC_011725.1"/>
</dbReference>
<dbReference type="KEGG" id="bcb:BCB4264_A4705"/>
<dbReference type="HOGENOM" id="CLU_125889_1_0_9"/>
<dbReference type="Proteomes" id="UP000007096">
    <property type="component" value="Chromosome"/>
</dbReference>
<dbReference type="GO" id="GO:0005886">
    <property type="term" value="C:plasma membrane"/>
    <property type="evidence" value="ECO:0007669"/>
    <property type="project" value="UniProtKB-SubCell"/>
</dbReference>
<dbReference type="HAMAP" id="MF_01874">
    <property type="entry name" value="UPF0756"/>
    <property type="match status" value="1"/>
</dbReference>
<dbReference type="InterPro" id="IPR007382">
    <property type="entry name" value="UPF0756_TM"/>
</dbReference>
<dbReference type="PANTHER" id="PTHR38452">
    <property type="entry name" value="UPF0756 MEMBRANE PROTEIN YEAL"/>
    <property type="match status" value="1"/>
</dbReference>
<dbReference type="PANTHER" id="PTHR38452:SF1">
    <property type="entry name" value="UPF0756 MEMBRANE PROTEIN YEAL"/>
    <property type="match status" value="1"/>
</dbReference>
<dbReference type="Pfam" id="PF04284">
    <property type="entry name" value="DUF441"/>
    <property type="match status" value="1"/>
</dbReference>
<proteinExistence type="inferred from homology"/>
<evidence type="ECO:0000255" key="1">
    <source>
        <dbReference type="HAMAP-Rule" id="MF_01874"/>
    </source>
</evidence>
<keyword id="KW-1003">Cell membrane</keyword>
<keyword id="KW-0472">Membrane</keyword>
<keyword id="KW-0812">Transmembrane</keyword>
<keyword id="KW-1133">Transmembrane helix</keyword>
<sequence>MISQSTLFLFILLIIGLIAKNQSLTVAIGVLFLLKFTFLGDKVFPYLQTKGINLGVTVITIAVLVPIATGEIGFKQLGEAAKSYYAWIALASGVAVALLAKGGVQLLTTDPHITTALVFGTVIAVALFNGVAVGPLIGAGIAYAVMSIIQMFK</sequence>
<reference key="1">
    <citation type="submission" date="2008-10" db="EMBL/GenBank/DDBJ databases">
        <title>Genome sequence of Bacillus cereus B4264.</title>
        <authorList>
            <person name="Dodson R.J."/>
            <person name="Durkin A.S."/>
            <person name="Rosovitz M.J."/>
            <person name="Rasko D.A."/>
            <person name="Hoffmaster A."/>
            <person name="Ravel J."/>
            <person name="Sutton G."/>
        </authorList>
    </citation>
    <scope>NUCLEOTIDE SEQUENCE [LARGE SCALE GENOMIC DNA]</scope>
    <source>
        <strain>B4264</strain>
    </source>
</reference>
<name>Y4705_BACC4</name>
<comment type="subcellular location">
    <subcellularLocation>
        <location evidence="1">Cell membrane</location>
        <topology evidence="1">Multi-pass membrane protein</topology>
    </subcellularLocation>
</comment>
<comment type="similarity">
    <text evidence="1">Belongs to the UPF0756 family.</text>
</comment>
<gene>
    <name type="ordered locus">BCB4264_A4705</name>
</gene>